<feature type="chain" id="PRO_1000006500" description="tRNA (guanine-N(1)-)-methyltransferase">
    <location>
        <begin position="1"/>
        <end position="226"/>
    </location>
</feature>
<feature type="binding site" evidence="1">
    <location>
        <position position="110"/>
    </location>
    <ligand>
        <name>S-adenosyl-L-methionine</name>
        <dbReference type="ChEBI" id="CHEBI:59789"/>
    </ligand>
</feature>
<feature type="binding site" evidence="1">
    <location>
        <begin position="130"/>
        <end position="135"/>
    </location>
    <ligand>
        <name>S-adenosyl-L-methionine</name>
        <dbReference type="ChEBI" id="CHEBI:59789"/>
    </ligand>
</feature>
<name>TRMD_NITSB</name>
<evidence type="ECO:0000255" key="1">
    <source>
        <dbReference type="HAMAP-Rule" id="MF_00605"/>
    </source>
</evidence>
<keyword id="KW-0963">Cytoplasm</keyword>
<keyword id="KW-0489">Methyltransferase</keyword>
<keyword id="KW-1185">Reference proteome</keyword>
<keyword id="KW-0949">S-adenosyl-L-methionine</keyword>
<keyword id="KW-0808">Transferase</keyword>
<keyword id="KW-0819">tRNA processing</keyword>
<gene>
    <name evidence="1" type="primary">trmD</name>
    <name type="ordered locus">NIS_1501</name>
</gene>
<sequence length="226" mass="26049">MKITYLTLFPNLMRCYFEDSILKRALEKKLFEIEFIDYRAFSHNKHKKVDRYKIGGGAGMLLEPRPIADALEFIKKKESWVVFTTPVAKRFTQKDAKRLAHKKHIVFVNGRYEGFDERLIEIYADEVFSIGDFILTGGELASLVMSDAIVRNIPGVLGNSASLEEESFEGDLLEAPSFTKPDVFKGKAVIKEFLKGNHSKISALKYQLARLRTKYYRPDKRIEDEK</sequence>
<reference key="1">
    <citation type="journal article" date="2007" name="Proc. Natl. Acad. Sci. U.S.A.">
        <title>Deep-sea vent epsilon-proteobacterial genomes provide insights into emergence of pathogens.</title>
        <authorList>
            <person name="Nakagawa S."/>
            <person name="Takaki Y."/>
            <person name="Shimamura S."/>
            <person name="Reysenbach A.-L."/>
            <person name="Takai K."/>
            <person name="Horikoshi K."/>
        </authorList>
    </citation>
    <scope>NUCLEOTIDE SEQUENCE [LARGE SCALE GENOMIC DNA]</scope>
    <source>
        <strain>SB155-2</strain>
    </source>
</reference>
<dbReference type="EC" id="2.1.1.228" evidence="1"/>
<dbReference type="EMBL" id="AP009178">
    <property type="protein sequence ID" value="BAF70608.1"/>
    <property type="molecule type" value="Genomic_DNA"/>
</dbReference>
<dbReference type="RefSeq" id="WP_012082871.1">
    <property type="nucleotide sequence ID" value="NC_009662.1"/>
</dbReference>
<dbReference type="SMR" id="A6Q549"/>
<dbReference type="FunCoup" id="A6Q549">
    <property type="interactions" value="440"/>
</dbReference>
<dbReference type="STRING" id="387092.NIS_1501"/>
<dbReference type="KEGG" id="nis:NIS_1501"/>
<dbReference type="eggNOG" id="COG0336">
    <property type="taxonomic scope" value="Bacteria"/>
</dbReference>
<dbReference type="HOGENOM" id="CLU_047363_0_1_7"/>
<dbReference type="InParanoid" id="A6Q549"/>
<dbReference type="OrthoDB" id="9807416at2"/>
<dbReference type="Proteomes" id="UP000001118">
    <property type="component" value="Chromosome"/>
</dbReference>
<dbReference type="GO" id="GO:0005829">
    <property type="term" value="C:cytosol"/>
    <property type="evidence" value="ECO:0007669"/>
    <property type="project" value="TreeGrafter"/>
</dbReference>
<dbReference type="GO" id="GO:0052906">
    <property type="term" value="F:tRNA (guanine(37)-N1)-methyltransferase activity"/>
    <property type="evidence" value="ECO:0007669"/>
    <property type="project" value="UniProtKB-UniRule"/>
</dbReference>
<dbReference type="GO" id="GO:0002939">
    <property type="term" value="P:tRNA N1-guanine methylation"/>
    <property type="evidence" value="ECO:0007669"/>
    <property type="project" value="TreeGrafter"/>
</dbReference>
<dbReference type="CDD" id="cd18080">
    <property type="entry name" value="TrmD-like"/>
    <property type="match status" value="1"/>
</dbReference>
<dbReference type="Gene3D" id="3.40.1280.10">
    <property type="match status" value="1"/>
</dbReference>
<dbReference type="Gene3D" id="1.10.1270.20">
    <property type="entry name" value="tRNA(m1g37)methyltransferase, domain 2"/>
    <property type="match status" value="1"/>
</dbReference>
<dbReference type="HAMAP" id="MF_00605">
    <property type="entry name" value="TrmD"/>
    <property type="match status" value="1"/>
</dbReference>
<dbReference type="InterPro" id="IPR029028">
    <property type="entry name" value="Alpha/beta_knot_MTases"/>
</dbReference>
<dbReference type="InterPro" id="IPR023148">
    <property type="entry name" value="tRNA_m1G_MeTrfase_C_sf"/>
</dbReference>
<dbReference type="InterPro" id="IPR002649">
    <property type="entry name" value="tRNA_m1G_MeTrfase_TrmD"/>
</dbReference>
<dbReference type="InterPro" id="IPR029026">
    <property type="entry name" value="tRNA_m1G_MTases_N"/>
</dbReference>
<dbReference type="InterPro" id="IPR016009">
    <property type="entry name" value="tRNA_MeTrfase_TRMD/TRM10"/>
</dbReference>
<dbReference type="NCBIfam" id="NF000648">
    <property type="entry name" value="PRK00026.1"/>
    <property type="match status" value="1"/>
</dbReference>
<dbReference type="NCBIfam" id="TIGR00088">
    <property type="entry name" value="trmD"/>
    <property type="match status" value="1"/>
</dbReference>
<dbReference type="PANTHER" id="PTHR46417">
    <property type="entry name" value="TRNA (GUANINE-N(1)-)-METHYLTRANSFERASE"/>
    <property type="match status" value="1"/>
</dbReference>
<dbReference type="PANTHER" id="PTHR46417:SF1">
    <property type="entry name" value="TRNA (GUANINE-N(1)-)-METHYLTRANSFERASE"/>
    <property type="match status" value="1"/>
</dbReference>
<dbReference type="Pfam" id="PF01746">
    <property type="entry name" value="tRNA_m1G_MT"/>
    <property type="match status" value="1"/>
</dbReference>
<dbReference type="PIRSF" id="PIRSF000386">
    <property type="entry name" value="tRNA_mtase"/>
    <property type="match status" value="1"/>
</dbReference>
<dbReference type="SUPFAM" id="SSF75217">
    <property type="entry name" value="alpha/beta knot"/>
    <property type="match status" value="1"/>
</dbReference>
<protein>
    <recommendedName>
        <fullName evidence="1">tRNA (guanine-N(1)-)-methyltransferase</fullName>
        <ecNumber evidence="1">2.1.1.228</ecNumber>
    </recommendedName>
    <alternativeName>
        <fullName evidence="1">M1G-methyltransferase</fullName>
    </alternativeName>
    <alternativeName>
        <fullName evidence="1">tRNA [GM37] methyltransferase</fullName>
    </alternativeName>
</protein>
<comment type="function">
    <text evidence="1">Specifically methylates guanosine-37 in various tRNAs.</text>
</comment>
<comment type="catalytic activity">
    <reaction evidence="1">
        <text>guanosine(37) in tRNA + S-adenosyl-L-methionine = N(1)-methylguanosine(37) in tRNA + S-adenosyl-L-homocysteine + H(+)</text>
        <dbReference type="Rhea" id="RHEA:36899"/>
        <dbReference type="Rhea" id="RHEA-COMP:10145"/>
        <dbReference type="Rhea" id="RHEA-COMP:10147"/>
        <dbReference type="ChEBI" id="CHEBI:15378"/>
        <dbReference type="ChEBI" id="CHEBI:57856"/>
        <dbReference type="ChEBI" id="CHEBI:59789"/>
        <dbReference type="ChEBI" id="CHEBI:73542"/>
        <dbReference type="ChEBI" id="CHEBI:74269"/>
        <dbReference type="EC" id="2.1.1.228"/>
    </reaction>
</comment>
<comment type="subunit">
    <text evidence="1">Homodimer.</text>
</comment>
<comment type="subcellular location">
    <subcellularLocation>
        <location evidence="1">Cytoplasm</location>
    </subcellularLocation>
</comment>
<comment type="similarity">
    <text evidence="1">Belongs to the RNA methyltransferase TrmD family.</text>
</comment>
<proteinExistence type="inferred from homology"/>
<organism>
    <name type="scientific">Nitratiruptor sp. (strain SB155-2)</name>
    <dbReference type="NCBI Taxonomy" id="387092"/>
    <lineage>
        <taxon>Bacteria</taxon>
        <taxon>Pseudomonadati</taxon>
        <taxon>Campylobacterota</taxon>
        <taxon>Epsilonproteobacteria</taxon>
        <taxon>Nautiliales</taxon>
        <taxon>Nitratiruptoraceae</taxon>
        <taxon>Nitratiruptor</taxon>
    </lineage>
</organism>
<accession>A6Q549</accession>